<protein>
    <recommendedName>
        <fullName evidence="6">Serine protease 43</fullName>
    </recommendedName>
</protein>
<sequence length="382" mass="42203">MGGFCGADRGGFLALLVWLQLLQPLFSGTYKPREDSGVMHRPQRPRRPRSDPEAPAQQSRLKSLSISHPSGVPVSVDRTEIPGSGSPSGTTTKITLENRRSSLGGPFFTDTCGHRITEVDPGSLSAGRKWPWQVSLQSQNEHVCGGSLISHRWVLTAAHCIYEQEEYMVMLGDDMLHSESESVTLVPVQDIIFPSNFDIQTMRNDIALALLYFPVNYSSLIQPVCLPEEPFRVKNGTVCWVTGWGQQNEIDAGFASILLQEVQQRILLQKHCNTLFQRQLGTSKNLVIKGMICGLQDSGQSLCWGDSGNPLVCESDNTWTQVGIMSWGINCNGVPVLSVYTDIAEYNEWVSYVLSQASRMDPMGVLVLYLSLVFPLALLVAL</sequence>
<keyword id="KW-1003">Cell membrane</keyword>
<keyword id="KW-0221">Differentiation</keyword>
<keyword id="KW-1015">Disulfide bond</keyword>
<keyword id="KW-0325">Glycoprotein</keyword>
<keyword id="KW-0336">GPI-anchor</keyword>
<keyword id="KW-0378">Hydrolase</keyword>
<keyword id="KW-0449">Lipoprotein</keyword>
<keyword id="KW-0472">Membrane</keyword>
<keyword id="KW-0645">Protease</keyword>
<keyword id="KW-1185">Reference proteome</keyword>
<keyword id="KW-0732">Signal</keyword>
<keyword id="KW-0744">Spermatogenesis</keyword>
<keyword id="KW-0812">Transmembrane</keyword>
<keyword id="KW-1133">Transmembrane helix</keyword>
<reference key="1">
    <citation type="journal article" date="2013" name="Biol. Reprod.">
        <title>Three testis-specific paralogous serine proteases play different roles in murine spermatogenesis and are involved in germ cell survival during meiosis.</title>
        <authorList>
            <person name="Yoneda R."/>
            <person name="Takahashi T."/>
            <person name="Matsui H."/>
            <person name="Takano N."/>
            <person name="Hasebe Y."/>
            <person name="Ogiwara K."/>
            <person name="Kimura A.P."/>
        </authorList>
    </citation>
    <scope>NUCLEOTIDE SEQUENCE [MRNA]</scope>
    <scope>FUNCTION</scope>
    <scope>SUBCELLULAR LOCATION</scope>
    <scope>TISSUE SPECIFICITY</scope>
    <scope>DEVELOPMENTAL STAGE</scope>
    <scope>TOPOLOGY</scope>
    <scope>CAUTION</scope>
</reference>
<reference key="2">
    <citation type="journal article" date="2009" name="PLoS Biol.">
        <title>Lineage-specific biology revealed by a finished genome assembly of the mouse.</title>
        <authorList>
            <person name="Church D.M."/>
            <person name="Goodstadt L."/>
            <person name="Hillier L.W."/>
            <person name="Zody M.C."/>
            <person name="Goldstein S."/>
            <person name="She X."/>
            <person name="Bult C.J."/>
            <person name="Agarwala R."/>
            <person name="Cherry J.L."/>
            <person name="DiCuccio M."/>
            <person name="Hlavina W."/>
            <person name="Kapustin Y."/>
            <person name="Meric P."/>
            <person name="Maglott D."/>
            <person name="Birtle Z."/>
            <person name="Marques A.C."/>
            <person name="Graves T."/>
            <person name="Zhou S."/>
            <person name="Teague B."/>
            <person name="Potamousis K."/>
            <person name="Churas C."/>
            <person name="Place M."/>
            <person name="Herschleb J."/>
            <person name="Runnheim R."/>
            <person name="Forrest D."/>
            <person name="Amos-Landgraf J."/>
            <person name="Schwartz D.C."/>
            <person name="Cheng Z."/>
            <person name="Lindblad-Toh K."/>
            <person name="Eichler E.E."/>
            <person name="Ponting C.P."/>
        </authorList>
    </citation>
    <scope>NUCLEOTIDE SEQUENCE [LARGE SCALE GENOMIC DNA]</scope>
    <source>
        <strain>C57BL/6J</strain>
    </source>
</reference>
<accession>Q76HL1</accession>
<feature type="signal peptide" evidence="1">
    <location>
        <begin position="1"/>
        <end position="27"/>
    </location>
</feature>
<feature type="chain" id="PRO_5015098640" description="Serine protease 43" evidence="1">
    <location>
        <begin position="28"/>
        <end position="382"/>
    </location>
</feature>
<feature type="transmembrane region" description="Helical" evidence="1">
    <location>
        <begin position="362"/>
        <end position="382"/>
    </location>
</feature>
<feature type="domain" description="Peptidase S1" evidence="2">
    <location>
        <begin position="119"/>
        <end position="355"/>
    </location>
</feature>
<feature type="region of interest" description="Disordered" evidence="3">
    <location>
        <begin position="30"/>
        <end position="97"/>
    </location>
</feature>
<feature type="compositionally biased region" description="Polar residues" evidence="3">
    <location>
        <begin position="56"/>
        <end position="68"/>
    </location>
</feature>
<feature type="compositionally biased region" description="Polar residues" evidence="3">
    <location>
        <begin position="85"/>
        <end position="95"/>
    </location>
</feature>
<feature type="active site" description="Charge relay system" evidence="2">
    <location>
        <position position="159"/>
    </location>
</feature>
<feature type="active site" description="Charge relay system" evidence="2">
    <location>
        <position position="205"/>
    </location>
</feature>
<feature type="active site" description="Charge relay system" evidence="2">
    <location>
        <position position="307"/>
    </location>
</feature>
<feature type="disulfide bond" evidence="2">
    <location>
        <begin position="144"/>
        <end position="160"/>
    </location>
</feature>
<feature type="disulfide bond" evidence="2">
    <location>
        <begin position="239"/>
        <end position="313"/>
    </location>
</feature>
<feature type="disulfide bond" evidence="2">
    <location>
        <begin position="272"/>
        <end position="293"/>
    </location>
</feature>
<feature type="disulfide bond" evidence="2">
    <location>
        <begin position="303"/>
        <end position="331"/>
    </location>
</feature>
<evidence type="ECO:0000255" key="1"/>
<evidence type="ECO:0000255" key="2">
    <source>
        <dbReference type="PROSITE-ProRule" id="PRU00274"/>
    </source>
</evidence>
<evidence type="ECO:0000256" key="3">
    <source>
        <dbReference type="SAM" id="MobiDB-lite"/>
    </source>
</evidence>
<evidence type="ECO:0000269" key="4">
    <source>
    </source>
</evidence>
<evidence type="ECO:0000303" key="5">
    <source>
    </source>
</evidence>
<evidence type="ECO:0000305" key="6"/>
<evidence type="ECO:0000312" key="7">
    <source>
        <dbReference type="EMBL" id="BAD06396.1"/>
    </source>
</evidence>
<evidence type="ECO:0000312" key="8">
    <source>
        <dbReference type="MGI" id="MGI:2684822"/>
    </source>
</evidence>
<proteinExistence type="evidence at protein level"/>
<name>PRS43_MOUSE</name>
<gene>
    <name evidence="8" type="primary">Prss43</name>
    <name evidence="5" type="synonym">Tessp3</name>
</gene>
<dbReference type="EMBL" id="AC139378">
    <property type="status" value="NOT_ANNOTATED_CDS"/>
    <property type="molecule type" value="Genomic_DNA"/>
</dbReference>
<dbReference type="EMBL" id="AB100999">
    <property type="protein sequence ID" value="BAD06396.1"/>
    <property type="molecule type" value="mRNA"/>
</dbReference>
<dbReference type="CCDS" id="CCDS23574.1"/>
<dbReference type="RefSeq" id="NP_955765.1">
    <property type="nucleotide sequence ID" value="NM_199471.1"/>
</dbReference>
<dbReference type="SMR" id="Q76HL1"/>
<dbReference type="FunCoup" id="Q76HL1">
    <property type="interactions" value="30"/>
</dbReference>
<dbReference type="MEROPS" id="S01.099"/>
<dbReference type="SwissPalm" id="Q76HL1"/>
<dbReference type="PaxDb" id="10090-ENSMUSP00000076752"/>
<dbReference type="ProteomicsDB" id="334438"/>
<dbReference type="DNASU" id="272643"/>
<dbReference type="Ensembl" id="ENSMUST00000077549.7">
    <property type="protein sequence ID" value="ENSMUSP00000076752.6"/>
    <property type="gene ID" value="ENSMUSG00000058398.7"/>
</dbReference>
<dbReference type="GeneID" id="272643"/>
<dbReference type="KEGG" id="mmu:272643"/>
<dbReference type="UCSC" id="uc009ruv.1">
    <property type="organism name" value="mouse"/>
</dbReference>
<dbReference type="AGR" id="MGI:2684822"/>
<dbReference type="CTD" id="272643"/>
<dbReference type="MGI" id="MGI:2684822">
    <property type="gene designation" value="Prss43"/>
</dbReference>
<dbReference type="VEuPathDB" id="HostDB:ENSMUSG00000058398"/>
<dbReference type="eggNOG" id="KOG3627">
    <property type="taxonomic scope" value="Eukaryota"/>
</dbReference>
<dbReference type="GeneTree" id="ENSGT00940000162829"/>
<dbReference type="HOGENOM" id="CLU_006842_0_4_1"/>
<dbReference type="InParanoid" id="Q76HL1"/>
<dbReference type="OMA" id="CGHRITE"/>
<dbReference type="OrthoDB" id="546450at2759"/>
<dbReference type="PhylomeDB" id="Q76HL1"/>
<dbReference type="TreeFam" id="TF351676"/>
<dbReference type="BioGRID-ORCS" id="272643">
    <property type="hits" value="2 hits in 77 CRISPR screens"/>
</dbReference>
<dbReference type="ChiTaRS" id="Prss43">
    <property type="organism name" value="mouse"/>
</dbReference>
<dbReference type="PRO" id="PR:Q76HL1"/>
<dbReference type="Proteomes" id="UP000000589">
    <property type="component" value="Chromosome 9"/>
</dbReference>
<dbReference type="RNAct" id="Q76HL1">
    <property type="molecule type" value="protein"/>
</dbReference>
<dbReference type="Bgee" id="ENSMUSG00000058398">
    <property type="expression patterns" value="Expressed in spermatocyte and 13 other cell types or tissues"/>
</dbReference>
<dbReference type="GO" id="GO:0005886">
    <property type="term" value="C:plasma membrane"/>
    <property type="evidence" value="ECO:0000314"/>
    <property type="project" value="MGI"/>
</dbReference>
<dbReference type="GO" id="GO:0098552">
    <property type="term" value="C:side of membrane"/>
    <property type="evidence" value="ECO:0007669"/>
    <property type="project" value="UniProtKB-KW"/>
</dbReference>
<dbReference type="GO" id="GO:0004252">
    <property type="term" value="F:serine-type endopeptidase activity"/>
    <property type="evidence" value="ECO:0007669"/>
    <property type="project" value="InterPro"/>
</dbReference>
<dbReference type="GO" id="GO:0007281">
    <property type="term" value="P:germ cell development"/>
    <property type="evidence" value="ECO:0000314"/>
    <property type="project" value="MGI"/>
</dbReference>
<dbReference type="GO" id="GO:0006508">
    <property type="term" value="P:proteolysis"/>
    <property type="evidence" value="ECO:0007669"/>
    <property type="project" value="UniProtKB-KW"/>
</dbReference>
<dbReference type="GO" id="GO:0007283">
    <property type="term" value="P:spermatogenesis"/>
    <property type="evidence" value="ECO:0000314"/>
    <property type="project" value="MGI"/>
</dbReference>
<dbReference type="CDD" id="cd00190">
    <property type="entry name" value="Tryp_SPc"/>
    <property type="match status" value="1"/>
</dbReference>
<dbReference type="FunFam" id="2.40.10.10:FF:000024">
    <property type="entry name" value="Serine protease 53"/>
    <property type="match status" value="1"/>
</dbReference>
<dbReference type="Gene3D" id="2.40.10.10">
    <property type="entry name" value="Trypsin-like serine proteases"/>
    <property type="match status" value="2"/>
</dbReference>
<dbReference type="InterPro" id="IPR009003">
    <property type="entry name" value="Peptidase_S1_PA"/>
</dbReference>
<dbReference type="InterPro" id="IPR043504">
    <property type="entry name" value="Peptidase_S1_PA_chymotrypsin"/>
</dbReference>
<dbReference type="InterPro" id="IPR001314">
    <property type="entry name" value="Peptidase_S1A"/>
</dbReference>
<dbReference type="InterPro" id="IPR001254">
    <property type="entry name" value="Trypsin_dom"/>
</dbReference>
<dbReference type="InterPro" id="IPR018114">
    <property type="entry name" value="TRYPSIN_HIS"/>
</dbReference>
<dbReference type="PANTHER" id="PTHR24253:SF159">
    <property type="entry name" value="SERINE PROTEASE 42"/>
    <property type="match status" value="1"/>
</dbReference>
<dbReference type="PANTHER" id="PTHR24253">
    <property type="entry name" value="TRANSMEMBRANE PROTEASE SERINE"/>
    <property type="match status" value="1"/>
</dbReference>
<dbReference type="Pfam" id="PF00089">
    <property type="entry name" value="Trypsin"/>
    <property type="match status" value="1"/>
</dbReference>
<dbReference type="PRINTS" id="PR00722">
    <property type="entry name" value="CHYMOTRYPSIN"/>
</dbReference>
<dbReference type="SMART" id="SM00020">
    <property type="entry name" value="Tryp_SPc"/>
    <property type="match status" value="1"/>
</dbReference>
<dbReference type="SUPFAM" id="SSF50494">
    <property type="entry name" value="Trypsin-like serine proteases"/>
    <property type="match status" value="1"/>
</dbReference>
<dbReference type="PROSITE" id="PS50240">
    <property type="entry name" value="TRYPSIN_DOM"/>
    <property type="match status" value="1"/>
</dbReference>
<dbReference type="PROSITE" id="PS00134">
    <property type="entry name" value="TRYPSIN_HIS"/>
    <property type="match status" value="1"/>
</dbReference>
<organism evidence="7">
    <name type="scientific">Mus musculus</name>
    <name type="common">Mouse</name>
    <dbReference type="NCBI Taxonomy" id="10090"/>
    <lineage>
        <taxon>Eukaryota</taxon>
        <taxon>Metazoa</taxon>
        <taxon>Chordata</taxon>
        <taxon>Craniata</taxon>
        <taxon>Vertebrata</taxon>
        <taxon>Euteleostomi</taxon>
        <taxon>Mammalia</taxon>
        <taxon>Eutheria</taxon>
        <taxon>Euarchontoglires</taxon>
        <taxon>Glires</taxon>
        <taxon>Rodentia</taxon>
        <taxon>Myomorpha</taxon>
        <taxon>Muroidea</taxon>
        <taxon>Muridae</taxon>
        <taxon>Murinae</taxon>
        <taxon>Mus</taxon>
        <taxon>Mus</taxon>
    </lineage>
</organism>
<comment type="function">
    <text evidence="4">Plays a role in spermatogenesis. Involved in germ cell survival during meiosis. Lacks protease activity in vitro.</text>
</comment>
<comment type="subcellular location">
    <subcellularLocation>
        <location evidence="4">Cell membrane</location>
        <topology evidence="4">Lipid-anchor</topology>
        <topology evidence="4">GPI-anchor</topology>
    </subcellularLocation>
</comment>
<comment type="tissue specificity">
    <text evidence="4">Testis-specific (PubMed:23536369). Expressed in germ cells at the stages from late pachytene spermatocytes to spermatids (PubMed:23536369).</text>
</comment>
<comment type="developmental stage">
    <text evidence="4">In testis, expressed at all stages from the late pachytene primary spermatocyte to the secondary spermatocyte. Not detected at day 7 after birth. Expression is detected at day 14 and increases dramatically at day 21 and reach a peak at day 28 to remain high until day 56.</text>
</comment>
<comment type="similarity">
    <text evidence="6">Belongs to the peptidase S1 family.</text>
</comment>
<comment type="caution">
    <text evidence="4">Lacks protease activity in vitro.</text>
</comment>